<gene>
    <name type="primary">YWHAB</name>
</gene>
<reference key="1">
    <citation type="journal article" date="2007" name="Genome Res.">
        <title>Comparative sequence analyses reveal rapid and divergent evolutionary changes of the WFDC locus in the primate lineage.</title>
        <authorList>
            <consortium name="NISC comparative sequencing program"/>
            <person name="Hurle B."/>
            <person name="Swanson W."/>
            <person name="Green E.D."/>
        </authorList>
    </citation>
    <scope>NUCLEOTIDE SEQUENCE [GENOMIC DNA]</scope>
</reference>
<feature type="chain" id="PRO_0000289632" description="14-3-3 protein beta/alpha">
    <location>
        <begin position="1"/>
        <end position="246"/>
    </location>
</feature>
<feature type="initiator methionine" description="Removed; alternate" evidence="3">
    <location>
        <position position="1"/>
    </location>
</feature>
<feature type="chain" id="PRO_0000367903" description="14-3-3 protein beta/alpha, N-terminally processed">
    <location>
        <begin position="2"/>
        <end position="246"/>
    </location>
</feature>
<feature type="site" description="Interaction with phosphoserine on interacting protein" evidence="1">
    <location>
        <position position="58"/>
    </location>
</feature>
<feature type="site" description="Interaction with phosphoserine on interacting protein" evidence="1">
    <location>
        <position position="129"/>
    </location>
</feature>
<feature type="modified residue" description="N-acetylmethionine" evidence="3">
    <location>
        <position position="1"/>
    </location>
</feature>
<feature type="modified residue" description="N-acetylthreonine; in 14-3-3 protein beta/alpha, N-terminally processed" evidence="3">
    <location>
        <position position="2"/>
    </location>
</feature>
<feature type="modified residue" description="Phosphothreonine" evidence="3">
    <location>
        <position position="2"/>
    </location>
</feature>
<feature type="modified residue" description="N6-acetyllysine" evidence="2">
    <location>
        <position position="5"/>
    </location>
</feature>
<feature type="modified residue" description="N6-acetyllysine; alternate" evidence="2">
    <location>
        <position position="51"/>
    </location>
</feature>
<feature type="modified residue" description="Phosphoserine" evidence="5">
    <location>
        <position position="60"/>
    </location>
</feature>
<feature type="modified residue" description="N6-acetyllysine" evidence="3">
    <location>
        <position position="70"/>
    </location>
</feature>
<feature type="modified residue" description="3'-nitrotyrosine" evidence="5">
    <location>
        <position position="84"/>
    </location>
</feature>
<feature type="modified residue" description="3'-nitrotyrosine" evidence="5">
    <location>
        <position position="106"/>
    </location>
</feature>
<feature type="modified residue" description="N6-acetyllysine" evidence="3">
    <location>
        <position position="117"/>
    </location>
</feature>
<feature type="modified residue" description="Phosphoserine" evidence="4">
    <location>
        <position position="186"/>
    </location>
</feature>
<feature type="modified residue" description="Phosphoserine" evidence="3">
    <location>
        <position position="232"/>
    </location>
</feature>
<feature type="cross-link" description="Glycyl lysine isopeptide (Lys-Gly) (interchain with G-Cter in SUMO2); alternate" evidence="2">
    <location>
        <position position="51"/>
    </location>
</feature>
<feature type="splice variant" id="VSP_026021" description="In isoform Short." evidence="6">
    <location>
        <begin position="1"/>
        <end position="2"/>
    </location>
</feature>
<feature type="modified residue" description="N-acetylmethionine" evidence="6">
    <location sequence="A4K2U9-2">
        <position position="1"/>
    </location>
</feature>
<comment type="function">
    <text evidence="3">Adapter protein implicated in the regulation of a large spectrum of both general and specialized signaling pathways. Binds to a large number of partners, usually by recognition of a phosphoserine or phosphothreonine motif. Binding generally results in the modulation of the activity of the binding partner. Negative regulator of osteogenesis. Blocks the nuclear translocation of the phosphorylated form (by AKT1) of SRPK2 and antagonizes its stimulatory effect on cyclin D1 expression resulting in blockage of neuronal apoptosis elicited by SRPK2. Negative regulator of signaling cascades that mediate activation of MAP kinases via AKAP13.</text>
</comment>
<comment type="subunit">
    <text evidence="3 5">Homodimer (By similarity). Interacts with SAMSN1 and PRKCE (By similarity). Interacts with AKAP13. Interacts with SSH1 and TORC2/CRTC2. Interacts with ABL1; the interaction results in cytoplasmic location of ABL1 and inhibition of cABL-mediated apoptosis. Interacts with ROR2 (dimer); the interaction results in phosphorylation of YWHAB on tyrosine residues. Interacts with GAB2. Interacts with YAP1 (phosphorylated form). Interacts with the phosphorylated (by AKT1) form of SRPK2. Interacts with PKA-phosphorylated AANAT. Interacts with MYO1C. Interacts with SIRT2 (By similarity). Interacts with the 'Thr-369' phosphorylated form of DAPK2 (By similarity). Interacts with PI4KB, TBC1D22A and TBC1D22B. Interacts with the 'Ser-1134' and 'Ser-1161' phosphorylated form of SOS1 (By similarity). Interacts (via phosphorylated form) with YWHAB; this interaction occurs in a protein kinase AKT1-dependent manner (By similarity). Interacts with SLITRK1. Interacts with SYNPO2 (phosphorylated form); YWHAB competes with ACTN2 for interaction with SYNPO2 (By similarity). Interacts with RIPOR2 (via phosphorylated form); this interaction occurs in a chemokine-dependent manner and does not compete for binding of RIPOR2 with RHOA nor blocks inhibition of RIPOR2-mediated RHOA activity (By similarity). Interacts with MARK2 and MARK3 (By similarity). Interacts with TESK1; the interaction is dependent on the phosphorylation of TESK1 'Ser-437' and inhibits TESK1 kinase activity (By similarity). Interacts with MEFV (By similarity). Interacts with HDAC4 (By similarity). Interacts with ADAM22 (via C-terminus) (By similarity).</text>
</comment>
<comment type="subcellular location">
    <subcellularLocation>
        <location evidence="3">Cytoplasm</location>
    </subcellularLocation>
    <subcellularLocation>
        <location evidence="3">Melanosome</location>
    </subcellularLocation>
</comment>
<comment type="alternative products">
    <event type="alternative initiation"/>
    <isoform>
        <id>A4K2U9-1</id>
        <name>Long</name>
        <sequence type="displayed"/>
    </isoform>
    <isoform>
        <id>A4K2U9-2</id>
        <name>Short</name>
        <sequence type="described" ref="VSP_026021"/>
    </isoform>
</comment>
<comment type="PTM">
    <text evidence="1">The alpha, brain-specific form differs from the beta form in being phosphorylated. Phosphorylated on Ser-60 by protein kinase C delta type catalytic subunit in a sphingosine-dependent fashion.</text>
</comment>
<comment type="PTM">
    <text evidence="1">Isoform Short contains a N-acetylmethionine at position 1.</text>
</comment>
<comment type="miscellaneous">
    <molecule>Isoform Short</molecule>
    <text evidence="6">Inferred by similarity.</text>
</comment>
<comment type="similarity">
    <text evidence="6">Belongs to the 14-3-3 family.</text>
</comment>
<name>1433B_PONAB</name>
<organism>
    <name type="scientific">Pongo abelii</name>
    <name type="common">Sumatran orangutan</name>
    <name type="synonym">Pongo pygmaeus abelii</name>
    <dbReference type="NCBI Taxonomy" id="9601"/>
    <lineage>
        <taxon>Eukaryota</taxon>
        <taxon>Metazoa</taxon>
        <taxon>Chordata</taxon>
        <taxon>Craniata</taxon>
        <taxon>Vertebrata</taxon>
        <taxon>Euteleostomi</taxon>
        <taxon>Mammalia</taxon>
        <taxon>Eutheria</taxon>
        <taxon>Euarchontoglires</taxon>
        <taxon>Primates</taxon>
        <taxon>Haplorrhini</taxon>
        <taxon>Catarrhini</taxon>
        <taxon>Hominidae</taxon>
        <taxon>Pongo</taxon>
    </lineage>
</organism>
<keyword id="KW-0007">Acetylation</keyword>
<keyword id="KW-0024">Alternative initiation</keyword>
<keyword id="KW-0963">Cytoplasm</keyword>
<keyword id="KW-1017">Isopeptide bond</keyword>
<keyword id="KW-0944">Nitration</keyword>
<keyword id="KW-0597">Phosphoprotein</keyword>
<keyword id="KW-1185">Reference proteome</keyword>
<keyword id="KW-0832">Ubl conjugation</keyword>
<accession>A4K2U9</accession>
<protein>
    <recommendedName>
        <fullName>14-3-3 protein beta/alpha</fullName>
    </recommendedName>
    <component>
        <recommendedName>
            <fullName>14-3-3 protein beta/alpha, N-terminally processed</fullName>
        </recommendedName>
    </component>
</protein>
<dbReference type="EMBL" id="DP000045">
    <property type="protein sequence ID" value="ABO52984.1"/>
    <property type="molecule type" value="Genomic_DNA"/>
</dbReference>
<dbReference type="RefSeq" id="NP_001162074.1">
    <molecule id="A4K2U9-1"/>
    <property type="nucleotide sequence ID" value="NM_001168603.1"/>
</dbReference>
<dbReference type="RefSeq" id="XP_009231897.1">
    <molecule id="A4K2U9-1"/>
    <property type="nucleotide sequence ID" value="XM_009233622.4"/>
</dbReference>
<dbReference type="SMR" id="A4K2U9"/>
<dbReference type="FunCoup" id="A4K2U9">
    <property type="interactions" value="3588"/>
</dbReference>
<dbReference type="STRING" id="9601.ENSPPYP00000012330"/>
<dbReference type="Ensembl" id="ENSPPYT00000012812.3">
    <molecule id="A4K2U9-1"/>
    <property type="protein sequence ID" value="ENSPPYP00000012330.3"/>
    <property type="gene ID" value="ENSPPYG00000011041.3"/>
</dbReference>
<dbReference type="GeneID" id="100137177"/>
<dbReference type="KEGG" id="pon:100137177"/>
<dbReference type="CTD" id="7529"/>
<dbReference type="eggNOG" id="KOG0841">
    <property type="taxonomic scope" value="Eukaryota"/>
</dbReference>
<dbReference type="GeneTree" id="ENSGT01090000260040"/>
<dbReference type="HOGENOM" id="CLU_058290_1_0_1"/>
<dbReference type="InParanoid" id="A4K2U9"/>
<dbReference type="OMA" id="AECKVFY"/>
<dbReference type="OrthoDB" id="10260625at2759"/>
<dbReference type="Proteomes" id="UP000001595">
    <property type="component" value="Chromosome 20"/>
</dbReference>
<dbReference type="GO" id="GO:0005829">
    <property type="term" value="C:cytosol"/>
    <property type="evidence" value="ECO:0007669"/>
    <property type="project" value="Ensembl"/>
</dbReference>
<dbReference type="GO" id="GO:0042470">
    <property type="term" value="C:melanosome"/>
    <property type="evidence" value="ECO:0007669"/>
    <property type="project" value="UniProtKB-SubCell"/>
</dbReference>
<dbReference type="GO" id="GO:0005634">
    <property type="term" value="C:nucleus"/>
    <property type="evidence" value="ECO:0007669"/>
    <property type="project" value="Ensembl"/>
</dbReference>
<dbReference type="GO" id="GO:0048471">
    <property type="term" value="C:perinuclear region of cytoplasm"/>
    <property type="evidence" value="ECO:0007669"/>
    <property type="project" value="Ensembl"/>
</dbReference>
<dbReference type="GO" id="GO:0042826">
    <property type="term" value="F:histone deacetylase binding"/>
    <property type="evidence" value="ECO:0007669"/>
    <property type="project" value="Ensembl"/>
</dbReference>
<dbReference type="GO" id="GO:0042802">
    <property type="term" value="F:identical protein binding"/>
    <property type="evidence" value="ECO:0007669"/>
    <property type="project" value="Ensembl"/>
</dbReference>
<dbReference type="GO" id="GO:0050815">
    <property type="term" value="F:phosphoserine residue binding"/>
    <property type="evidence" value="ECO:0007669"/>
    <property type="project" value="Ensembl"/>
</dbReference>
<dbReference type="GO" id="GO:0019904">
    <property type="term" value="F:protein domain specific binding"/>
    <property type="evidence" value="ECO:0007669"/>
    <property type="project" value="Ensembl"/>
</dbReference>
<dbReference type="GO" id="GO:0004860">
    <property type="term" value="F:protein kinase inhibitor activity"/>
    <property type="evidence" value="ECO:0000250"/>
    <property type="project" value="UniProtKB"/>
</dbReference>
<dbReference type="GO" id="GO:0004864">
    <property type="term" value="F:protein phosphatase inhibitor activity"/>
    <property type="evidence" value="ECO:0007669"/>
    <property type="project" value="Ensembl"/>
</dbReference>
<dbReference type="GO" id="GO:0140311">
    <property type="term" value="F:protein sequestering activity"/>
    <property type="evidence" value="ECO:0007669"/>
    <property type="project" value="Ensembl"/>
</dbReference>
<dbReference type="GO" id="GO:0045744">
    <property type="term" value="P:negative regulation of G protein-coupled receptor signaling pathway"/>
    <property type="evidence" value="ECO:0000250"/>
    <property type="project" value="UniProtKB"/>
</dbReference>
<dbReference type="GO" id="GO:0042308">
    <property type="term" value="P:negative regulation of protein import into nucleus"/>
    <property type="evidence" value="ECO:0007669"/>
    <property type="project" value="Ensembl"/>
</dbReference>
<dbReference type="GO" id="GO:0045944">
    <property type="term" value="P:positive regulation of transcription by RNA polymerase II"/>
    <property type="evidence" value="ECO:0007669"/>
    <property type="project" value="Ensembl"/>
</dbReference>
<dbReference type="GO" id="GO:0006605">
    <property type="term" value="P:protein targeting"/>
    <property type="evidence" value="ECO:0007669"/>
    <property type="project" value="Ensembl"/>
</dbReference>
<dbReference type="CDD" id="cd10022">
    <property type="entry name" value="14-3-3_beta_zeta"/>
    <property type="match status" value="1"/>
</dbReference>
<dbReference type="FunFam" id="1.20.190.20:FF:000001">
    <property type="entry name" value="14-3-3 gamma 1"/>
    <property type="match status" value="1"/>
</dbReference>
<dbReference type="Gene3D" id="1.20.190.20">
    <property type="entry name" value="14-3-3 domain"/>
    <property type="match status" value="1"/>
</dbReference>
<dbReference type="InterPro" id="IPR000308">
    <property type="entry name" value="14-3-3"/>
</dbReference>
<dbReference type="InterPro" id="IPR023409">
    <property type="entry name" value="14-3-3_CS"/>
</dbReference>
<dbReference type="InterPro" id="IPR036815">
    <property type="entry name" value="14-3-3_dom_sf"/>
</dbReference>
<dbReference type="InterPro" id="IPR023410">
    <property type="entry name" value="14-3-3_domain"/>
</dbReference>
<dbReference type="PANTHER" id="PTHR18860">
    <property type="entry name" value="14-3-3 PROTEIN"/>
    <property type="match status" value="1"/>
</dbReference>
<dbReference type="Pfam" id="PF00244">
    <property type="entry name" value="14-3-3"/>
    <property type="match status" value="1"/>
</dbReference>
<dbReference type="PIRSF" id="PIRSF000868">
    <property type="entry name" value="14-3-3"/>
    <property type="match status" value="1"/>
</dbReference>
<dbReference type="PRINTS" id="PR00305">
    <property type="entry name" value="1433ZETA"/>
</dbReference>
<dbReference type="SMART" id="SM00101">
    <property type="entry name" value="14_3_3"/>
    <property type="match status" value="1"/>
</dbReference>
<dbReference type="SUPFAM" id="SSF48445">
    <property type="entry name" value="14-3-3 protein"/>
    <property type="match status" value="1"/>
</dbReference>
<dbReference type="PROSITE" id="PS00796">
    <property type="entry name" value="1433_1"/>
    <property type="match status" value="1"/>
</dbReference>
<dbReference type="PROSITE" id="PS00797">
    <property type="entry name" value="1433_2"/>
    <property type="match status" value="1"/>
</dbReference>
<evidence type="ECO:0000250" key="1"/>
<evidence type="ECO:0000250" key="2">
    <source>
        <dbReference type="UniProtKB" id="P27348"/>
    </source>
</evidence>
<evidence type="ECO:0000250" key="3">
    <source>
        <dbReference type="UniProtKB" id="P31946"/>
    </source>
</evidence>
<evidence type="ECO:0000250" key="4">
    <source>
        <dbReference type="UniProtKB" id="P68251"/>
    </source>
</evidence>
<evidence type="ECO:0000250" key="5">
    <source>
        <dbReference type="UniProtKB" id="Q9CQV8"/>
    </source>
</evidence>
<evidence type="ECO:0000305" key="6"/>
<proteinExistence type="inferred from homology"/>
<sequence>MTMDKSELVQKAKLAEQAERYDDMAAAMKAVTEQGHELSNEERNLLSVAYKNVVGARRSSWRVISSIEQKTERNEKKQQMGKEYREKIEAELQDICNDVLELLDKYLIPNATQPESKVFYLKMKGDYFRYLSEVASGDNKQTTVSNSQQAYQEAFEISKKEMQPTHPIRLGLALNFSVFYYEILNSPEKACSLAKTAFDEAIAELDTLNEESYKDSTLIMQLLRDNLTLWTSENQGDEGDAGEGEN</sequence>